<proteinExistence type="evidence at protein level"/>
<reference key="1">
    <citation type="journal article" date="2010" name="Nature">
        <title>Comparative genomics reveals mobile pathogenicity chromosomes in Fusarium.</title>
        <authorList>
            <person name="Ma L.-J."/>
            <person name="van der Does H.C."/>
            <person name="Borkovich K.A."/>
            <person name="Coleman J.J."/>
            <person name="Daboussi M.-J."/>
            <person name="Di Pietro A."/>
            <person name="Dufresne M."/>
            <person name="Freitag M."/>
            <person name="Grabherr M."/>
            <person name="Henrissat B."/>
            <person name="Houterman P.M."/>
            <person name="Kang S."/>
            <person name="Shim W.-B."/>
            <person name="Woloshuk C."/>
            <person name="Xie X."/>
            <person name="Xu J.-R."/>
            <person name="Antoniw J."/>
            <person name="Baker S.E."/>
            <person name="Bluhm B.H."/>
            <person name="Breakspear A."/>
            <person name="Brown D.W."/>
            <person name="Butchko R.A.E."/>
            <person name="Chapman S."/>
            <person name="Coulson R."/>
            <person name="Coutinho P.M."/>
            <person name="Danchin E.G.J."/>
            <person name="Diener A."/>
            <person name="Gale L.R."/>
            <person name="Gardiner D.M."/>
            <person name="Goff S."/>
            <person name="Hammond-Kosack K.E."/>
            <person name="Hilburn K."/>
            <person name="Hua-Van A."/>
            <person name="Jonkers W."/>
            <person name="Kazan K."/>
            <person name="Kodira C.D."/>
            <person name="Koehrsen M."/>
            <person name="Kumar L."/>
            <person name="Lee Y.-H."/>
            <person name="Li L."/>
            <person name="Manners J.M."/>
            <person name="Miranda-Saavedra D."/>
            <person name="Mukherjee M."/>
            <person name="Park G."/>
            <person name="Park J."/>
            <person name="Park S.-Y."/>
            <person name="Proctor R.H."/>
            <person name="Regev A."/>
            <person name="Ruiz-Roldan M.C."/>
            <person name="Sain D."/>
            <person name="Sakthikumar S."/>
            <person name="Sykes S."/>
            <person name="Schwartz D.C."/>
            <person name="Turgeon B.G."/>
            <person name="Wapinski I."/>
            <person name="Yoder O."/>
            <person name="Young S."/>
            <person name="Zeng Q."/>
            <person name="Zhou S."/>
            <person name="Galagan J."/>
            <person name="Cuomo C.A."/>
            <person name="Kistler H.C."/>
            <person name="Rep M."/>
        </authorList>
    </citation>
    <scope>NUCLEOTIDE SEQUENCE [LARGE SCALE GENOMIC DNA]</scope>
    <source>
        <strain>M3125 / FGSC 7600</strain>
    </source>
</reference>
<reference key="2">
    <citation type="journal article" date="2006" name="Planta">
        <title>Fusaric acid induces apoptosis in saffron root-tip cells: roles of caspase-like activity, cytochrome c, and H2O2.</title>
        <authorList>
            <person name="Samadi L."/>
            <person name="Shahsavan Behboodi B."/>
        </authorList>
    </citation>
    <scope>BIOTECHNOLOGY</scope>
</reference>
<reference key="3">
    <citation type="journal article" date="2008" name="J. Appl. Microbiol.">
        <title>Bikaverin and fusaric acid from Fusarium oxysporum show antioomycete activity against Phytophthora infestans.</title>
        <authorList>
            <person name="Son S.W."/>
            <person name="Kim H.Y."/>
            <person name="Choi G.J."/>
            <person name="Lim H.K."/>
            <person name="Jang K.S."/>
            <person name="Lee S.O."/>
            <person name="Lee S."/>
            <person name="Sung N.D."/>
            <person name="Kim J.C."/>
        </authorList>
    </citation>
    <scope>BIOTECHNOLOGY</scope>
</reference>
<reference key="4">
    <citation type="journal article" date="2011" name="Arch. Pharm. Res.">
        <title>Antimycobacterial activity of fusaric acid from a mangrove endophyte and its metal complexes.</title>
        <authorList>
            <person name="Pan J.H."/>
            <person name="Chen Y."/>
            <person name="Huang Y.H."/>
            <person name="Tao Y.W."/>
            <person name="Wang J."/>
            <person name="Li Y."/>
            <person name="Peng Y."/>
            <person name="Dong T."/>
            <person name="Lai X.M."/>
            <person name="Lin Y.C."/>
        </authorList>
    </citation>
    <scope>BIOTECHNOLOGY</scope>
</reference>
<reference key="5">
    <citation type="journal article" date="2011" name="Toxicon">
        <title>Phytotoxicity of fusaric acid and analogs to cotton.</title>
        <authorList>
            <person name="Stipanovic R.D."/>
            <person name="Puckhaber L.S."/>
            <person name="Liu J."/>
            <person name="Bell A.A."/>
        </authorList>
    </citation>
    <scope>BIOTECHNOLOGY</scope>
</reference>
<reference key="6">
    <citation type="journal article" date="2012" name="Fungal Genet. Biol.">
        <title>Lae1 regulates expression of multiple secondary metabolite gene clusters in Fusarium verticillioides.</title>
        <authorList>
            <person name="Butchko R.A."/>
            <person name="Brown D.W."/>
            <person name="Busman M."/>
            <person name="Tudzynski B."/>
            <person name="Wiemann P."/>
        </authorList>
    </citation>
    <scope>INDUCTION</scope>
</reference>
<reference key="7">
    <citation type="journal article" date="2012" name="Planta Med.">
        <title>In vitro acanthamoebicidal activity of fusaric acid and dehydrofusaric acid from an endophytic fungus Fusarium sp. Tlau3.</title>
        <authorList>
            <person name="Boonman N."/>
            <person name="Prachya S."/>
            <person name="Boonmee A."/>
            <person name="Kittakoop P."/>
            <person name="Wiyakrutta S."/>
            <person name="Sriubolmas N."/>
            <person name="Warit S."/>
            <person name="Dharmkrong-At Chusattayanond A."/>
        </authorList>
    </citation>
    <scope>BIOTECHNOLOGY</scope>
</reference>
<reference key="8">
    <citation type="journal article" date="2013" name="Planta">
        <title>Fusaric acid induction of programmed cell death modulated through nitric oxide signalling in tobacco suspension cells.</title>
        <authorList>
            <person name="Jiao J."/>
            <person name="Zhou B."/>
            <person name="Zhu X."/>
            <person name="Gao Z."/>
            <person name="Liang Y."/>
        </authorList>
    </citation>
    <scope>BIOTECHNOLOGY</scope>
</reference>
<reference key="9">
    <citation type="journal article" date="2013" name="PLoS ONE">
        <title>Contamination of bananas with beauvericin and fusaric acid produced by Fusarium oxysporum f. sp. cubense.</title>
        <authorList>
            <person name="Li C."/>
            <person name="Zuo C."/>
            <person name="Deng G."/>
            <person name="Kuang R."/>
            <person name="Yang Q."/>
            <person name="Hu C."/>
            <person name="Sheng O."/>
            <person name="Zhang S."/>
            <person name="Ma L."/>
            <person name="Wei Y."/>
            <person name="Yang J."/>
            <person name="Liu S."/>
            <person name="Biswas M.K."/>
            <person name="Viljoen A."/>
            <person name="Yi G."/>
        </authorList>
    </citation>
    <scope>BIOTECHNOLOGY</scope>
</reference>
<reference key="10">
    <citation type="journal article" date="2015" name="Mol. Plant Microbe Interact.">
        <title>Identification of a 12-gene fusaric acid biosynthetic gene cluster in Fusarium species through comparative and functional genomics.</title>
        <authorList>
            <person name="Brown D.W."/>
            <person name="Lee S.H."/>
            <person name="Kim L.H."/>
            <person name="Ryu J.G."/>
            <person name="Lee S."/>
            <person name="Seo Y."/>
            <person name="Kim Y.H."/>
            <person name="Busman M."/>
            <person name="Yun S.H."/>
            <person name="Proctor R.H."/>
            <person name="Lee T."/>
        </authorList>
    </citation>
    <scope>FUNCTION</scope>
    <scope>DISRUPTION PHENOTYPE</scope>
    <scope>CATALYTIC ACTIVITY</scope>
</reference>
<feature type="chain" id="PRO_0000437349" description="Oxidase FUB9">
    <location>
        <begin position="1"/>
        <end position="387"/>
    </location>
</feature>
<feature type="domain" description="FMN hydroxy acid dehydrogenase" evidence="2">
    <location>
        <begin position="18"/>
        <end position="379"/>
    </location>
</feature>
<feature type="region of interest" description="Disordered" evidence="3">
    <location>
        <begin position="1"/>
        <end position="20"/>
    </location>
</feature>
<feature type="active site" description="Proton acceptor" evidence="2">
    <location>
        <position position="274"/>
    </location>
</feature>
<feature type="binding site" evidence="2">
    <location>
        <position position="44"/>
    </location>
    <ligand>
        <name>a 2-oxocarboxylate</name>
        <dbReference type="ChEBI" id="CHEBI:35179"/>
    </ligand>
</feature>
<feature type="binding site" evidence="2">
    <location>
        <position position="126"/>
    </location>
    <ligand>
        <name>FMN</name>
        <dbReference type="ChEBI" id="CHEBI:58210"/>
    </ligand>
</feature>
<feature type="binding site" evidence="2">
    <location>
        <position position="150"/>
    </location>
    <ligand>
        <name>FMN</name>
        <dbReference type="ChEBI" id="CHEBI:58210"/>
    </ligand>
</feature>
<feature type="binding site" evidence="2">
    <location>
        <position position="178"/>
    </location>
    <ligand>
        <name>FMN</name>
        <dbReference type="ChEBI" id="CHEBI:58210"/>
    </ligand>
</feature>
<feature type="binding site" evidence="2">
    <location>
        <position position="187"/>
    </location>
    <ligand>
        <name>a 2-oxocarboxylate</name>
        <dbReference type="ChEBI" id="CHEBI:35179"/>
    </ligand>
</feature>
<feature type="binding site" evidence="2">
    <location>
        <position position="250"/>
    </location>
    <ligand>
        <name>FMN</name>
        <dbReference type="ChEBI" id="CHEBI:58210"/>
    </ligand>
</feature>
<feature type="binding site" evidence="2">
    <location>
        <position position="277"/>
    </location>
    <ligand>
        <name>a 2-oxocarboxylate</name>
        <dbReference type="ChEBI" id="CHEBI:35179"/>
    </ligand>
</feature>
<feature type="binding site" evidence="2">
    <location>
        <begin position="305"/>
        <end position="309"/>
    </location>
    <ligand>
        <name>FMN</name>
        <dbReference type="ChEBI" id="CHEBI:58210"/>
    </ligand>
</feature>
<feature type="binding site" evidence="2">
    <location>
        <begin position="328"/>
        <end position="329"/>
    </location>
    <ligand>
        <name>FMN</name>
        <dbReference type="ChEBI" id="CHEBI:58210"/>
    </ligand>
</feature>
<dbReference type="EC" id="1.-.-.-" evidence="15"/>
<dbReference type="EMBL" id="CM000580">
    <property type="protein sequence ID" value="EWG54275.1"/>
    <property type="status" value="ALT_SEQ"/>
    <property type="molecule type" value="Genomic_DNA"/>
</dbReference>
<dbReference type="EMBL" id="CM000580">
    <property type="protein sequence ID" value="EWG54276.1"/>
    <property type="molecule type" value="Genomic_DNA"/>
</dbReference>
<dbReference type="EMBL" id="CM000580">
    <property type="protein sequence ID" value="EWG54277.1"/>
    <property type="molecule type" value="Genomic_DNA"/>
</dbReference>
<dbReference type="RefSeq" id="XP_018760466.1">
    <property type="nucleotide sequence ID" value="XM_018901871.1"/>
</dbReference>
<dbReference type="RefSeq" id="XP_018760467.1">
    <property type="nucleotide sequence ID" value="XM_018901872.1"/>
</dbReference>
<dbReference type="RefSeq" id="XP_018760468.1">
    <property type="nucleotide sequence ID" value="XM_018901873.1"/>
</dbReference>
<dbReference type="SMR" id="W7NCP1"/>
<dbReference type="STRING" id="334819.W7NCP1"/>
<dbReference type="EnsemblFungi" id="FVEG_12531T0">
    <property type="protein sequence ID" value="FVEG_12531T0"/>
    <property type="gene ID" value="FVEG_12531"/>
</dbReference>
<dbReference type="GeneID" id="30069964"/>
<dbReference type="KEGG" id="fvr:FVEG_12531"/>
<dbReference type="VEuPathDB" id="FungiDB:FVEG_12531"/>
<dbReference type="eggNOG" id="KOG0538">
    <property type="taxonomic scope" value="Eukaryota"/>
</dbReference>
<dbReference type="HOGENOM" id="CLU_020639_0_0_1"/>
<dbReference type="OMA" id="KIAWMKS"/>
<dbReference type="OrthoDB" id="9905at110618"/>
<dbReference type="PHI-base" id="PHI:3383"/>
<dbReference type="Proteomes" id="UP000009096">
    <property type="component" value="Chromosome 3"/>
</dbReference>
<dbReference type="GO" id="GO:0010181">
    <property type="term" value="F:FMN binding"/>
    <property type="evidence" value="ECO:0007669"/>
    <property type="project" value="InterPro"/>
</dbReference>
<dbReference type="GO" id="GO:0016491">
    <property type="term" value="F:oxidoreductase activity"/>
    <property type="evidence" value="ECO:0007669"/>
    <property type="project" value="UniProtKB-KW"/>
</dbReference>
<dbReference type="CDD" id="cd02809">
    <property type="entry name" value="alpha_hydroxyacid_oxid_FMN"/>
    <property type="match status" value="1"/>
</dbReference>
<dbReference type="FunFam" id="3.20.20.70:FF:000056">
    <property type="entry name" value="hydroxyacid oxidase 2"/>
    <property type="match status" value="1"/>
</dbReference>
<dbReference type="Gene3D" id="3.20.20.70">
    <property type="entry name" value="Aldolase class I"/>
    <property type="match status" value="1"/>
</dbReference>
<dbReference type="InterPro" id="IPR013785">
    <property type="entry name" value="Aldolase_TIM"/>
</dbReference>
<dbReference type="InterPro" id="IPR012133">
    <property type="entry name" value="Alpha-hydoxy_acid_DH_FMN"/>
</dbReference>
<dbReference type="InterPro" id="IPR000262">
    <property type="entry name" value="FMN-dep_DH"/>
</dbReference>
<dbReference type="InterPro" id="IPR037396">
    <property type="entry name" value="FMN_HAD"/>
</dbReference>
<dbReference type="InterPro" id="IPR008259">
    <property type="entry name" value="FMN_hydac_DH_AS"/>
</dbReference>
<dbReference type="PANTHER" id="PTHR10578:SF149">
    <property type="entry name" value="2-HYDROXYACID OXIDASE 2"/>
    <property type="match status" value="1"/>
</dbReference>
<dbReference type="PANTHER" id="PTHR10578">
    <property type="entry name" value="S -2-HYDROXY-ACID OXIDASE-RELATED"/>
    <property type="match status" value="1"/>
</dbReference>
<dbReference type="Pfam" id="PF01070">
    <property type="entry name" value="FMN_dh"/>
    <property type="match status" value="1"/>
</dbReference>
<dbReference type="PIRSF" id="PIRSF000138">
    <property type="entry name" value="Al-hdrx_acd_dh"/>
    <property type="match status" value="1"/>
</dbReference>
<dbReference type="SUPFAM" id="SSF51395">
    <property type="entry name" value="FMN-linked oxidoreductases"/>
    <property type="match status" value="1"/>
</dbReference>
<dbReference type="PROSITE" id="PS00557">
    <property type="entry name" value="FMN_HYDROXY_ACID_DH_1"/>
    <property type="match status" value="1"/>
</dbReference>
<dbReference type="PROSITE" id="PS51349">
    <property type="entry name" value="FMN_HYDROXY_ACID_DH_2"/>
    <property type="match status" value="1"/>
</dbReference>
<sequence length="387" mass="41279">MSRTNLPIQPAKMSDATSSKPQIFSIQDLKQAASDKMSQMYRDYYNGGAMDNITLATNEAAFDRYLLRPRVLRNVSNIDMTTTLWGTKAALPLGVSPSAMHRLAHADGEVGTSKACAARHIPMILSALSNDTLEDVSGQSSDGSTPYAIQVSPFKNRQITTNLLNRAKAAGYKAVVLTVDAPMFGRRLDDLRNGFSVPPGFSFPNLSAQTQSGSGGLGGGIPDLSFDTGATWEEKIAWMKSQTDLQLWVKGVTSPLDAQIAIEQGVDGIIISNHGGRQLDTTPATIDILREIAPVAKGKTRIAIDGGFRRGSDIFKAVALGADFVFVGRIAIWGLAYDGSNGVGLALDLLINEFKLCMGLAGCSKISDITPAHLSLLNAKGVLEGVY</sequence>
<evidence type="ECO:0000250" key="1">
    <source>
        <dbReference type="UniProtKB" id="S0DRI9"/>
    </source>
</evidence>
<evidence type="ECO:0000255" key="2">
    <source>
        <dbReference type="PROSITE-ProRule" id="PRU00683"/>
    </source>
</evidence>
<evidence type="ECO:0000256" key="3">
    <source>
        <dbReference type="SAM" id="MobiDB-lite"/>
    </source>
</evidence>
<evidence type="ECO:0000269" key="4">
    <source>
    </source>
</evidence>
<evidence type="ECO:0000269" key="5">
    <source>
    </source>
</evidence>
<evidence type="ECO:0000269" key="6">
    <source>
    </source>
</evidence>
<evidence type="ECO:0000269" key="7">
    <source>
    </source>
</evidence>
<evidence type="ECO:0000269" key="8">
    <source>
    </source>
</evidence>
<evidence type="ECO:0000269" key="9">
    <source>
    </source>
</evidence>
<evidence type="ECO:0000269" key="10">
    <source>
    </source>
</evidence>
<evidence type="ECO:0000269" key="11">
    <source>
    </source>
</evidence>
<evidence type="ECO:0000269" key="12">
    <source>
    </source>
</evidence>
<evidence type="ECO:0000303" key="13">
    <source>
    </source>
</evidence>
<evidence type="ECO:0000305" key="14"/>
<evidence type="ECO:0000305" key="15">
    <source>
    </source>
</evidence>
<organism>
    <name type="scientific">Gibberella moniliformis (strain M3125 / FGSC 7600)</name>
    <name type="common">Maize ear and stalk rot fungus</name>
    <name type="synonym">Fusarium verticillioides</name>
    <dbReference type="NCBI Taxonomy" id="334819"/>
    <lineage>
        <taxon>Eukaryota</taxon>
        <taxon>Fungi</taxon>
        <taxon>Dikarya</taxon>
        <taxon>Ascomycota</taxon>
        <taxon>Pezizomycotina</taxon>
        <taxon>Sordariomycetes</taxon>
        <taxon>Hypocreomycetidae</taxon>
        <taxon>Hypocreales</taxon>
        <taxon>Nectriaceae</taxon>
        <taxon>Fusarium</taxon>
        <taxon>Fusarium fujikuroi species complex</taxon>
    </lineage>
</organism>
<protein>
    <recommendedName>
        <fullName evidence="13">Oxidase FUB9</fullName>
        <ecNumber evidence="15">1.-.-.-</ecNumber>
    </recommendedName>
    <alternativeName>
        <fullName evidence="13">Fusaric acid biosynthesis protein 9</fullName>
    </alternativeName>
</protein>
<name>FUB9_GIBM7</name>
<comment type="function">
    <text evidence="1 12">Oxidase; part of the gene cluster that mediates the biosynthesis of fusaric acid, a mycotoxin with low to moderate toxicity to animals and humans, but with high phytotoxic properties (PubMed:25372119). L-aspartate is suggested as fusaric acid amino acid precursor that is activated and further processed to O-acetyl-L-homoserine by cluster enzymes aspartate kinase FUB3 and homoserine O-acetyltransferase FUB5, as well as enzymes of the primary metabolism (By similarity). The polyketide synthase (PKS) FUB1 generates the triketide trans-2-hexenal which is presumptively released by the hydrolase FUB4 and linked to the NRPS-bound amino acid precursor by NAD(P)-dependent dehydrogenase FUB6 (By similarity). FUB1, FUB4, and the non-canonical NRPS Fub8 may form an enzyme complex (By similarity). Further processing of the NRPS-bound intermediate might be carried out by FUB6 and the sulfhydrylase FUB7, enabling a spontaneous electrocyclization to close the carbon backbone of fusaric acid (By similarity). Dihydrofusaric acid is likely to be released via reduction by the thioester reductase (TR) domain of FUB8 whereupon the final oxidation to fusaric acid may (also) be performed by the FMN-dependent dehydrogenase FUB9 (By similarity).</text>
</comment>
<comment type="cofactor">
    <cofactor evidence="2">
        <name>FMN</name>
        <dbReference type="ChEBI" id="CHEBI:58210"/>
    </cofactor>
</comment>
<comment type="pathway">
    <text evidence="12">Mycotoxin biosynthesis.</text>
</comment>
<comment type="induction">
    <text evidence="8">Expression is positively regulated by the secondary metabolism regulator LAE1 (PubMed:22713715).</text>
</comment>
<comment type="disruption phenotype">
    <text evidence="12">Does not alter fusaric acid production (PubMed:25372119).</text>
</comment>
<comment type="biotechnology">
    <text evidence="4 5 6 7 9 10 11">Fusaric acid is phytotoxic to plants such as cotton and banana (PubMed:20955724, PubMed:23922960). It has been shown to induce programmed cell death in plants (PubMed:16868776, PubMed:23838885). In addition to a mild toxicity to animals, fusaric acid exhibits acanthamoebicidal, antioomycete, and antimycobacterial activities (PubMed:17927749, PubMed:21811925, PubMed:22864988).</text>
</comment>
<comment type="similarity">
    <text evidence="14">Belongs to the FMN-dependent alpha-hydroxy acid dehydrogenase family.</text>
</comment>
<comment type="sequence caution" evidence="14">
    <conflict type="erroneous gene model prediction">
        <sequence resource="EMBL-CDS" id="EWG54275"/>
    </conflict>
</comment>
<accession>W7NCP1</accession>
<accession>W7N2A8</accession>
<gene>
    <name evidence="13" type="primary">FUB9</name>
    <name type="ORF">FVEG_12531</name>
</gene>
<keyword id="KW-0285">Flavoprotein</keyword>
<keyword id="KW-0288">FMN</keyword>
<keyword id="KW-0560">Oxidoreductase</keyword>
<keyword id="KW-1185">Reference proteome</keyword>